<sequence length="142" mass="15682">MNRQQNDLILQFAAVIIFFMVMVFGFSLFLAGHYTPGGGFVGGLLFASSLVIITIAFDIETMRKIFPLDFKILIGIGLVFCIATPIASWFLGKNFFTHVTFDIPLFILEPVHMTTAVFFDFGVLCAVVGTVMTIIISIGENE</sequence>
<keyword id="KW-0050">Antiport</keyword>
<keyword id="KW-1003">Cell membrane</keyword>
<keyword id="KW-0375">Hydrogen ion transport</keyword>
<keyword id="KW-0406">Ion transport</keyword>
<keyword id="KW-0472">Membrane</keyword>
<keyword id="KW-0915">Sodium</keyword>
<keyword id="KW-0739">Sodium transport</keyword>
<keyword id="KW-0812">Transmembrane</keyword>
<keyword id="KW-1133">Transmembrane helix</keyword>
<keyword id="KW-0813">Transport</keyword>
<gene>
    <name type="primary">mnhB1</name>
    <name type="ordered locus">SAV0951</name>
</gene>
<feature type="chain" id="PRO_0000088857" description="Na(+)/H(+) antiporter subunit B1">
    <location>
        <begin position="1"/>
        <end position="142"/>
    </location>
</feature>
<feature type="transmembrane region" description="Helical" evidence="2">
    <location>
        <begin position="9"/>
        <end position="31"/>
    </location>
</feature>
<feature type="transmembrane region" description="Helical" evidence="2">
    <location>
        <begin position="35"/>
        <end position="57"/>
    </location>
</feature>
<feature type="transmembrane region" description="Helical" evidence="2">
    <location>
        <begin position="70"/>
        <end position="92"/>
    </location>
</feature>
<feature type="transmembrane region" description="Helical" evidence="2">
    <location>
        <begin position="116"/>
        <end position="138"/>
    </location>
</feature>
<organism>
    <name type="scientific">Staphylococcus aureus (strain Mu50 / ATCC 700699)</name>
    <dbReference type="NCBI Taxonomy" id="158878"/>
    <lineage>
        <taxon>Bacteria</taxon>
        <taxon>Bacillati</taxon>
        <taxon>Bacillota</taxon>
        <taxon>Bacilli</taxon>
        <taxon>Bacillales</taxon>
        <taxon>Staphylococcaceae</taxon>
        <taxon>Staphylococcus</taxon>
    </lineage>
</organism>
<dbReference type="EMBL" id="BA000017">
    <property type="protein sequence ID" value="BAB57113.1"/>
    <property type="molecule type" value="Genomic_DNA"/>
</dbReference>
<dbReference type="RefSeq" id="WP_001081626.1">
    <property type="nucleotide sequence ID" value="NC_002758.2"/>
</dbReference>
<dbReference type="SMR" id="P60676"/>
<dbReference type="GeneID" id="66839149"/>
<dbReference type="KEGG" id="sav:SAV0951"/>
<dbReference type="HOGENOM" id="CLU_101659_1_1_9"/>
<dbReference type="PhylomeDB" id="P60676"/>
<dbReference type="Proteomes" id="UP000002481">
    <property type="component" value="Chromosome"/>
</dbReference>
<dbReference type="GO" id="GO:0005886">
    <property type="term" value="C:plasma membrane"/>
    <property type="evidence" value="ECO:0007669"/>
    <property type="project" value="UniProtKB-SubCell"/>
</dbReference>
<dbReference type="GO" id="GO:0015297">
    <property type="term" value="F:antiporter activity"/>
    <property type="evidence" value="ECO:0007669"/>
    <property type="project" value="UniProtKB-KW"/>
</dbReference>
<dbReference type="GO" id="GO:0008324">
    <property type="term" value="F:monoatomic cation transmembrane transporter activity"/>
    <property type="evidence" value="ECO:0007669"/>
    <property type="project" value="InterPro"/>
</dbReference>
<dbReference type="GO" id="GO:1902600">
    <property type="term" value="P:proton transmembrane transport"/>
    <property type="evidence" value="ECO:0007669"/>
    <property type="project" value="UniProtKB-KW"/>
</dbReference>
<dbReference type="GO" id="GO:0006814">
    <property type="term" value="P:sodium ion transport"/>
    <property type="evidence" value="ECO:0007669"/>
    <property type="project" value="UniProtKB-KW"/>
</dbReference>
<dbReference type="InterPro" id="IPR050622">
    <property type="entry name" value="CPA3_antiporter_subunitB"/>
</dbReference>
<dbReference type="InterPro" id="IPR005281">
    <property type="entry name" value="CPA3_sub_B"/>
</dbReference>
<dbReference type="InterPro" id="IPR007182">
    <property type="entry name" value="MnhB"/>
</dbReference>
<dbReference type="NCBIfam" id="TIGR00943">
    <property type="entry name" value="2a6301s02"/>
    <property type="match status" value="1"/>
</dbReference>
<dbReference type="NCBIfam" id="NF009223">
    <property type="entry name" value="PRK12573.1"/>
    <property type="match status" value="1"/>
</dbReference>
<dbReference type="PANTHER" id="PTHR33932">
    <property type="entry name" value="NA(+)/H(+) ANTIPORTER SUBUNIT B"/>
    <property type="match status" value="1"/>
</dbReference>
<dbReference type="PANTHER" id="PTHR33932:SF4">
    <property type="entry name" value="NA(+)_H(+) ANTIPORTER SUBUNIT B"/>
    <property type="match status" value="1"/>
</dbReference>
<dbReference type="Pfam" id="PF04039">
    <property type="entry name" value="MnhB"/>
    <property type="match status" value="1"/>
</dbReference>
<evidence type="ECO:0000250" key="1"/>
<evidence type="ECO:0000255" key="2"/>
<evidence type="ECO:0000305" key="3"/>
<comment type="function">
    <text evidence="1">Mnh complex is a Na(+)/H(+) antiporter involved in Na(+) excretion.</text>
</comment>
<comment type="subunit">
    <text evidence="1">May form a heterooligomeric complex that consists of seven subunits: mnhA1, mnhB1, mnhC1, mnhD1, mnhE1, mnhF1 and mnhG1.</text>
</comment>
<comment type="subcellular location">
    <subcellularLocation>
        <location evidence="3">Cell membrane</location>
        <topology evidence="3">Multi-pass membrane protein</topology>
    </subcellularLocation>
</comment>
<comment type="similarity">
    <text evidence="3">Belongs to the CPA3 antiporters (TC 2.A.63) subunit B family.</text>
</comment>
<proteinExistence type="inferred from homology"/>
<accession>P60676</accession>
<accession>Q9ZNG5</accession>
<name>MNHB1_STAAM</name>
<protein>
    <recommendedName>
        <fullName>Na(+)/H(+) antiporter subunit B1</fullName>
    </recommendedName>
    <alternativeName>
        <fullName>Mnh complex subunit B1</fullName>
    </alternativeName>
</protein>
<reference key="1">
    <citation type="journal article" date="2001" name="Lancet">
        <title>Whole genome sequencing of meticillin-resistant Staphylococcus aureus.</title>
        <authorList>
            <person name="Kuroda M."/>
            <person name="Ohta T."/>
            <person name="Uchiyama I."/>
            <person name="Baba T."/>
            <person name="Yuzawa H."/>
            <person name="Kobayashi I."/>
            <person name="Cui L."/>
            <person name="Oguchi A."/>
            <person name="Aoki K."/>
            <person name="Nagai Y."/>
            <person name="Lian J.-Q."/>
            <person name="Ito T."/>
            <person name="Kanamori M."/>
            <person name="Matsumaru H."/>
            <person name="Maruyama A."/>
            <person name="Murakami H."/>
            <person name="Hosoyama A."/>
            <person name="Mizutani-Ui Y."/>
            <person name="Takahashi N.K."/>
            <person name="Sawano T."/>
            <person name="Inoue R."/>
            <person name="Kaito C."/>
            <person name="Sekimizu K."/>
            <person name="Hirakawa H."/>
            <person name="Kuhara S."/>
            <person name="Goto S."/>
            <person name="Yabuzaki J."/>
            <person name="Kanehisa M."/>
            <person name="Yamashita A."/>
            <person name="Oshima K."/>
            <person name="Furuya K."/>
            <person name="Yoshino C."/>
            <person name="Shiba T."/>
            <person name="Hattori M."/>
            <person name="Ogasawara N."/>
            <person name="Hayashi H."/>
            <person name="Hiramatsu K."/>
        </authorList>
    </citation>
    <scope>NUCLEOTIDE SEQUENCE [LARGE SCALE GENOMIC DNA]</scope>
    <source>
        <strain>Mu50 / ATCC 700699</strain>
    </source>
</reference>